<feature type="chain" id="PRO_0000205183" description="Nuclear factor of activated T-cells 5">
    <location>
        <begin position="1"/>
        <end position="1531"/>
    </location>
</feature>
<feature type="domain" description="RHD" evidence="3">
    <location>
        <begin position="264"/>
        <end position="443"/>
    </location>
</feature>
<feature type="DNA-binding region" evidence="17">
    <location>
        <begin position="293"/>
        <end position="300"/>
    </location>
</feature>
<feature type="region of interest" description="Disordered" evidence="4">
    <location>
        <begin position="34"/>
        <end position="89"/>
    </location>
</feature>
<feature type="region of interest" description="Disordered" evidence="4">
    <location>
        <begin position="114"/>
        <end position="141"/>
    </location>
</feature>
<feature type="region of interest" description="Disordered" evidence="4">
    <location>
        <begin position="175"/>
        <end position="220"/>
    </location>
</feature>
<feature type="region of interest" description="Disordered" evidence="4">
    <location>
        <begin position="241"/>
        <end position="265"/>
    </location>
</feature>
<feature type="region of interest" description="Disordered" evidence="4">
    <location>
        <begin position="640"/>
        <end position="666"/>
    </location>
</feature>
<feature type="region of interest" description="Disordered" evidence="4">
    <location>
        <begin position="841"/>
        <end position="891"/>
    </location>
</feature>
<feature type="region of interest" description="Disordered" evidence="4">
    <location>
        <begin position="958"/>
        <end position="996"/>
    </location>
</feature>
<feature type="region of interest" description="Disordered" evidence="4">
    <location>
        <begin position="1211"/>
        <end position="1304"/>
    </location>
</feature>
<feature type="region of interest" description="Disordered" evidence="4">
    <location>
        <begin position="1316"/>
        <end position="1371"/>
    </location>
</feature>
<feature type="region of interest" description="Disordered" evidence="4">
    <location>
        <begin position="1473"/>
        <end position="1502"/>
    </location>
</feature>
<feature type="compositionally biased region" description="Polar residues" evidence="4">
    <location>
        <begin position="41"/>
        <end position="51"/>
    </location>
</feature>
<feature type="compositionally biased region" description="Low complexity" evidence="4">
    <location>
        <begin position="63"/>
        <end position="89"/>
    </location>
</feature>
<feature type="compositionally biased region" description="Polar residues" evidence="4">
    <location>
        <begin position="122"/>
        <end position="134"/>
    </location>
</feature>
<feature type="compositionally biased region" description="Low complexity" evidence="4">
    <location>
        <begin position="179"/>
        <end position="192"/>
    </location>
</feature>
<feature type="compositionally biased region" description="Basic residues" evidence="4">
    <location>
        <begin position="200"/>
        <end position="212"/>
    </location>
</feature>
<feature type="compositionally biased region" description="Polar residues" evidence="4">
    <location>
        <begin position="241"/>
        <end position="260"/>
    </location>
</feature>
<feature type="compositionally biased region" description="Low complexity" evidence="4">
    <location>
        <begin position="646"/>
        <end position="656"/>
    </location>
</feature>
<feature type="compositionally biased region" description="Polar residues" evidence="4">
    <location>
        <begin position="841"/>
        <end position="852"/>
    </location>
</feature>
<feature type="compositionally biased region" description="Polar residues" evidence="4">
    <location>
        <begin position="869"/>
        <end position="878"/>
    </location>
</feature>
<feature type="compositionally biased region" description="Low complexity" evidence="4">
    <location>
        <begin position="879"/>
        <end position="888"/>
    </location>
</feature>
<feature type="compositionally biased region" description="Low complexity" evidence="4">
    <location>
        <begin position="960"/>
        <end position="980"/>
    </location>
</feature>
<feature type="compositionally biased region" description="Polar residues" evidence="4">
    <location>
        <begin position="981"/>
        <end position="996"/>
    </location>
</feature>
<feature type="compositionally biased region" description="Polar residues" evidence="4">
    <location>
        <begin position="1224"/>
        <end position="1247"/>
    </location>
</feature>
<feature type="compositionally biased region" description="Low complexity" evidence="4">
    <location>
        <begin position="1248"/>
        <end position="1266"/>
    </location>
</feature>
<feature type="compositionally biased region" description="Polar residues" evidence="4">
    <location>
        <begin position="1267"/>
        <end position="1278"/>
    </location>
</feature>
<feature type="compositionally biased region" description="Polar residues" evidence="4">
    <location>
        <begin position="1291"/>
        <end position="1304"/>
    </location>
</feature>
<feature type="compositionally biased region" description="Low complexity" evidence="4">
    <location>
        <begin position="1320"/>
        <end position="1330"/>
    </location>
</feature>
<feature type="compositionally biased region" description="Polar residues" evidence="4">
    <location>
        <begin position="1331"/>
        <end position="1371"/>
    </location>
</feature>
<feature type="compositionally biased region" description="Low complexity" evidence="4">
    <location>
        <begin position="1475"/>
        <end position="1486"/>
    </location>
</feature>
<feature type="compositionally biased region" description="Polar residues" evidence="4">
    <location>
        <begin position="1487"/>
        <end position="1502"/>
    </location>
</feature>
<feature type="modified residue" description="Phosphoserine" evidence="8">
    <location>
        <position position="120"/>
    </location>
</feature>
<feature type="modified residue" description="N6-acetyllysine" evidence="2">
    <location>
        <position position="122"/>
    </location>
</feature>
<feature type="modified residue" description="Phosphoserine" evidence="8">
    <location>
        <position position="134"/>
    </location>
</feature>
<feature type="modified residue" description="Phosphothreonine; by CDK5" evidence="8 20">
    <location>
        <position position="135"/>
    </location>
</feature>
<feature type="modified residue" description="Phosphoserine" evidence="8">
    <location>
        <position position="155"/>
    </location>
</feature>
<feature type="modified residue" description="Phosphoserine" evidence="20">
    <location>
        <position position="561"/>
    </location>
</feature>
<feature type="cross-link" description="Glycyl lysine isopeptide (Lys-Gly) (interchain with G-Cter in SUMO1); alternate" evidence="21">
    <location>
        <position position="556"/>
    </location>
</feature>
<feature type="cross-link" description="Glycyl lysine isopeptide (Lys-Gly) (interchain with G-Cter in SUMO2); alternate" evidence="21 22 23 24 25">
    <location>
        <position position="556"/>
    </location>
</feature>
<feature type="cross-link" description="Glycyl lysine isopeptide (Lys-Gly) (interchain with G-Cter in SUMO2)" evidence="25">
    <location>
        <position position="603"/>
    </location>
</feature>
<feature type="splice variant" id="VSP_058784" description="In isoform A." evidence="12 13 14">
    <location>
        <begin position="1"/>
        <end position="76"/>
    </location>
</feature>
<feature type="splice variant" id="VSP_058785" description="In isoform B, isoform D and isoform E." evidence="14 15 18">
    <original>R</original>
    <variation>RDSLKLHPSQNFHRAGLLE</variation>
    <location>
        <position position="24"/>
    </location>
</feature>
<feature type="splice variant" id="VSP_058786" description="In isoform B." evidence="18">
    <original>DASSAPSSSSMGGAC</original>
    <variation>GFASEAGSVCIKNDL</variation>
    <location>
        <begin position="67"/>
        <end position="81"/>
    </location>
</feature>
<feature type="splice variant" id="VSP_058787" description="In isoform B." evidence="18">
    <location>
        <begin position="82"/>
        <end position="1531"/>
    </location>
</feature>
<feature type="splice variant" id="VSP_058788" description="In isoform D." evidence="15">
    <location>
        <position position="546"/>
    </location>
</feature>
<feature type="mutagenesis site" description="Normal nuclear localization." evidence="8">
    <original>S</original>
    <variation>A</variation>
    <location>
        <position position="120"/>
    </location>
</feature>
<feature type="mutagenesis site" description="Reduced nuclear localization." evidence="8">
    <original>S</original>
    <variation>A</variation>
    <location>
        <position position="134"/>
    </location>
</feature>
<feature type="mutagenesis site" description="Reduced nuclear localization." evidence="8">
    <original>T</original>
    <variation>A</variation>
    <location>
        <position position="135"/>
    </location>
</feature>
<feature type="mutagenesis site" description="Increased nuclear localization." evidence="8">
    <original>S</original>
    <variation>A</variation>
    <location>
        <position position="155"/>
    </location>
</feature>
<feature type="sequence conflict" description="In Ref. 3; CAC42764/CAC42765." evidence="16" ref="3">
    <original>QP</original>
    <variation>HA</variation>
    <location>
        <begin position="666"/>
        <end position="667"/>
    </location>
</feature>
<feature type="sequence conflict" description="In Ref. 9; CAB09693." evidence="16" ref="9">
    <original>E</original>
    <variation>D</variation>
    <location>
        <position position="1369"/>
    </location>
</feature>
<feature type="strand" evidence="26">
    <location>
        <begin position="275"/>
        <end position="277"/>
    </location>
</feature>
<feature type="strand" evidence="26">
    <location>
        <begin position="280"/>
        <end position="286"/>
    </location>
</feature>
<feature type="strand" evidence="26">
    <location>
        <begin position="310"/>
        <end position="312"/>
    </location>
</feature>
<feature type="strand" evidence="26">
    <location>
        <begin position="315"/>
        <end position="320"/>
    </location>
</feature>
<feature type="strand" evidence="26">
    <location>
        <begin position="325"/>
        <end position="337"/>
    </location>
</feature>
<feature type="strand" evidence="26">
    <location>
        <begin position="342"/>
        <end position="348"/>
    </location>
</feature>
<feature type="strand" evidence="26">
    <location>
        <begin position="358"/>
        <end position="362"/>
    </location>
</feature>
<feature type="strand" evidence="26">
    <location>
        <begin position="365"/>
        <end position="372"/>
    </location>
</feature>
<feature type="helix" evidence="26">
    <location>
        <begin position="374"/>
        <end position="376"/>
    </location>
</feature>
<feature type="strand" evidence="26">
    <location>
        <begin position="379"/>
        <end position="381"/>
    </location>
</feature>
<feature type="strand" evidence="26">
    <location>
        <begin position="384"/>
        <end position="389"/>
    </location>
</feature>
<feature type="helix" evidence="26">
    <location>
        <begin position="392"/>
        <end position="396"/>
    </location>
</feature>
<feature type="strand" evidence="26">
    <location>
        <begin position="410"/>
        <end position="420"/>
    </location>
</feature>
<feature type="strand" evidence="26">
    <location>
        <begin position="422"/>
        <end position="424"/>
    </location>
</feature>
<feature type="strand" evidence="26">
    <location>
        <begin position="426"/>
        <end position="432"/>
    </location>
</feature>
<feature type="strand" evidence="26">
    <location>
        <begin position="446"/>
        <end position="451"/>
    </location>
</feature>
<feature type="strand" evidence="26">
    <location>
        <begin position="454"/>
        <end position="456"/>
    </location>
</feature>
<feature type="strand" evidence="26">
    <location>
        <begin position="462"/>
        <end position="468"/>
    </location>
</feature>
<feature type="strand" evidence="26">
    <location>
        <begin position="475"/>
        <end position="482"/>
    </location>
</feature>
<feature type="strand" evidence="26">
    <location>
        <begin position="489"/>
        <end position="492"/>
    </location>
</feature>
<feature type="helix" evidence="26">
    <location>
        <begin position="496"/>
        <end position="498"/>
    </location>
</feature>
<feature type="strand" evidence="26">
    <location>
        <begin position="501"/>
        <end position="507"/>
    </location>
</feature>
<feature type="strand" evidence="26">
    <location>
        <begin position="520"/>
        <end position="528"/>
    </location>
</feature>
<feature type="strand" evidence="26">
    <location>
        <begin position="537"/>
        <end position="542"/>
    </location>
</feature>
<feature type="cross-link" description="Glycyl lysine isopeptide (Lys-Gly) (interchain with G-Cter in SUMO2)" evidence="23 25">
    <location sequence="O94916-4">
        <position position="573"/>
    </location>
</feature>
<evidence type="ECO:0000250" key="1">
    <source>
        <dbReference type="UniProtKB" id="D3ZGB1"/>
    </source>
</evidence>
<evidence type="ECO:0000250" key="2">
    <source>
        <dbReference type="UniProtKB" id="Q9WV30"/>
    </source>
</evidence>
<evidence type="ECO:0000255" key="3">
    <source>
        <dbReference type="PROSITE-ProRule" id="PRU00265"/>
    </source>
</evidence>
<evidence type="ECO:0000256" key="4">
    <source>
        <dbReference type="SAM" id="MobiDB-lite"/>
    </source>
</evidence>
<evidence type="ECO:0000269" key="5">
    <source>
    </source>
</evidence>
<evidence type="ECO:0000269" key="6">
    <source>
    </source>
</evidence>
<evidence type="ECO:0000269" key="7">
    <source>
    </source>
</evidence>
<evidence type="ECO:0000269" key="8">
    <source>
    </source>
</evidence>
<evidence type="ECO:0000269" key="9">
    <source>
    </source>
</evidence>
<evidence type="ECO:0000269" key="10">
    <source>
    </source>
</evidence>
<evidence type="ECO:0000303" key="11">
    <source>
    </source>
</evidence>
<evidence type="ECO:0000303" key="12">
    <source>
    </source>
</evidence>
<evidence type="ECO:0000303" key="13">
    <source>
    </source>
</evidence>
<evidence type="ECO:0000303" key="14">
    <source>
    </source>
</evidence>
<evidence type="ECO:0000303" key="15">
    <source>
    </source>
</evidence>
<evidence type="ECO:0000305" key="16"/>
<evidence type="ECO:0000305" key="17">
    <source>
    </source>
</evidence>
<evidence type="ECO:0000305" key="18">
    <source>
    </source>
</evidence>
<evidence type="ECO:0000312" key="19">
    <source>
        <dbReference type="HGNC" id="HGNC:7774"/>
    </source>
</evidence>
<evidence type="ECO:0007744" key="20">
    <source>
    </source>
</evidence>
<evidence type="ECO:0007744" key="21">
    <source>
    </source>
</evidence>
<evidence type="ECO:0007744" key="22">
    <source>
    </source>
</evidence>
<evidence type="ECO:0007744" key="23">
    <source>
    </source>
</evidence>
<evidence type="ECO:0007744" key="24">
    <source>
    </source>
</evidence>
<evidence type="ECO:0007744" key="25">
    <source>
    </source>
</evidence>
<evidence type="ECO:0007829" key="26">
    <source>
        <dbReference type="PDB" id="1IMH"/>
    </source>
</evidence>
<name>NFAT5_HUMAN</name>
<protein>
    <recommendedName>
        <fullName>Nuclear factor of activated T-cells 5</fullName>
        <shortName>NF-AT5</shortName>
    </recommendedName>
    <alternativeName>
        <fullName>T-cell transcription factor NFAT5</fullName>
    </alternativeName>
    <alternativeName>
        <fullName evidence="12">Tonicity-responsive enhancer-binding protein</fullName>
        <shortName evidence="12">TonE-binding protein</shortName>
        <shortName evidence="12">TonEBP</shortName>
    </alternativeName>
</protein>
<proteinExistence type="evidence at protein level"/>
<dbReference type="EMBL" id="AF089824">
    <property type="protein sequence ID" value="AAD18136.1"/>
    <property type="molecule type" value="mRNA"/>
</dbReference>
<dbReference type="EMBL" id="AF134870">
    <property type="protein sequence ID" value="AAD38360.1"/>
    <property type="molecule type" value="mRNA"/>
</dbReference>
<dbReference type="EMBL" id="AF346509">
    <property type="protein sequence ID" value="AAK91166.1"/>
    <property type="status" value="ALT_SEQ"/>
    <property type="molecule type" value="mRNA"/>
</dbReference>
<dbReference type="EMBL" id="AJ243298">
    <property type="protein sequence ID" value="CAC42764.1"/>
    <property type="molecule type" value="mRNA"/>
</dbReference>
<dbReference type="EMBL" id="AJ243299">
    <property type="protein sequence ID" value="CAC42765.1"/>
    <property type="status" value="ALT_FRAME"/>
    <property type="molecule type" value="mRNA"/>
</dbReference>
<dbReference type="EMBL" id="AB020634">
    <property type="protein sequence ID" value="BAA74850.2"/>
    <property type="status" value="ALT_INIT"/>
    <property type="molecule type" value="mRNA"/>
</dbReference>
<dbReference type="EMBL" id="AC009032">
    <property type="status" value="NOT_ANNOTATED_CDS"/>
    <property type="molecule type" value="Genomic_DNA"/>
</dbReference>
<dbReference type="EMBL" id="AC012321">
    <property type="status" value="NOT_ANNOTATED_CDS"/>
    <property type="molecule type" value="Genomic_DNA"/>
</dbReference>
<dbReference type="EMBL" id="CH471092">
    <property type="protein sequence ID" value="EAW83281.1"/>
    <property type="molecule type" value="Genomic_DNA"/>
</dbReference>
<dbReference type="EMBL" id="BC131509">
    <property type="protein sequence ID" value="AAI31510.1"/>
    <property type="molecule type" value="mRNA"/>
</dbReference>
<dbReference type="EMBL" id="BC146765">
    <property type="protein sequence ID" value="AAI46766.1"/>
    <property type="molecule type" value="mRNA"/>
</dbReference>
<dbReference type="EMBL" id="AF163836">
    <property type="protein sequence ID" value="AAD48441.1"/>
    <property type="molecule type" value="mRNA"/>
</dbReference>
<dbReference type="EMBL" id="Z97016">
    <property type="protein sequence ID" value="CAB09693.1"/>
    <property type="status" value="ALT_FRAME"/>
    <property type="molecule type" value="mRNA"/>
</dbReference>
<dbReference type="CCDS" id="CCDS10881.1">
    <molecule id="O94916-1"/>
</dbReference>
<dbReference type="CCDS" id="CCDS45518.1">
    <molecule id="O94916-5"/>
</dbReference>
<dbReference type="CCDS" id="CCDS45519.1">
    <molecule id="O94916-4"/>
</dbReference>
<dbReference type="RefSeq" id="NP_001106649.1">
    <molecule id="O94916-4"/>
    <property type="nucleotide sequence ID" value="NM_001113178.3"/>
</dbReference>
<dbReference type="RefSeq" id="NP_006590.1">
    <molecule id="O94916-1"/>
    <property type="nucleotide sequence ID" value="NM_006599.4"/>
</dbReference>
<dbReference type="RefSeq" id="NP_619727.2">
    <molecule id="O94916-5"/>
    <property type="nucleotide sequence ID" value="NM_138713.4"/>
</dbReference>
<dbReference type="RefSeq" id="NP_619728.2">
    <molecule id="O94916-2"/>
    <property type="nucleotide sequence ID" value="NM_138714.3"/>
</dbReference>
<dbReference type="RefSeq" id="NP_775321.1">
    <molecule id="O94916-2"/>
    <property type="nucleotide sequence ID" value="NM_173214.3"/>
</dbReference>
<dbReference type="RefSeq" id="NP_775322.1">
    <molecule id="O94916-2"/>
    <property type="nucleotide sequence ID" value="NM_173215.3"/>
</dbReference>
<dbReference type="RefSeq" id="XP_006721188.1">
    <property type="nucleotide sequence ID" value="XM_006721125.3"/>
</dbReference>
<dbReference type="RefSeq" id="XP_011521120.1">
    <property type="nucleotide sequence ID" value="XM_011522818.2"/>
</dbReference>
<dbReference type="RefSeq" id="XP_016878359.1">
    <property type="nucleotide sequence ID" value="XM_017022870.1"/>
</dbReference>
<dbReference type="RefSeq" id="XP_047289468.1">
    <molecule id="O94916-2"/>
    <property type="nucleotide sequence ID" value="XM_047433512.1"/>
</dbReference>
<dbReference type="RefSeq" id="XP_054235379.1">
    <molecule id="O94916-2"/>
    <property type="nucleotide sequence ID" value="XM_054379404.1"/>
</dbReference>
<dbReference type="PDB" id="1IMH">
    <property type="method" value="X-ray"/>
    <property type="resolution" value="2.86 A"/>
    <property type="chains" value="C/D=264-544"/>
</dbReference>
<dbReference type="PDBsum" id="1IMH"/>
<dbReference type="SMR" id="O94916"/>
<dbReference type="BioGRID" id="115949">
    <property type="interactions" value="42"/>
</dbReference>
<dbReference type="CORUM" id="O94916"/>
<dbReference type="DIP" id="DIP-58524N"/>
<dbReference type="FunCoup" id="O94916">
    <property type="interactions" value="2683"/>
</dbReference>
<dbReference type="IntAct" id="O94916">
    <property type="interactions" value="13"/>
</dbReference>
<dbReference type="MINT" id="O94916"/>
<dbReference type="STRING" id="9606.ENSP00000338806"/>
<dbReference type="GlyGen" id="O94916">
    <property type="glycosylation" value="2 sites, 1 O-linked glycan (1 site)"/>
</dbReference>
<dbReference type="iPTMnet" id="O94916"/>
<dbReference type="MetOSite" id="O94916"/>
<dbReference type="PhosphoSitePlus" id="O94916"/>
<dbReference type="SwissPalm" id="O94916"/>
<dbReference type="BioMuta" id="NFAT5"/>
<dbReference type="jPOST" id="O94916"/>
<dbReference type="MassIVE" id="O94916"/>
<dbReference type="PaxDb" id="9606-ENSP00000457593"/>
<dbReference type="PeptideAtlas" id="O94916"/>
<dbReference type="ProteomicsDB" id="20588"/>
<dbReference type="ProteomicsDB" id="50551">
    <molecule id="O94916-1"/>
</dbReference>
<dbReference type="ProteomicsDB" id="50552">
    <molecule id="O94916-2"/>
</dbReference>
<dbReference type="ProteomicsDB" id="50553">
    <molecule id="O94916-3"/>
</dbReference>
<dbReference type="ProteomicsDB" id="50554">
    <molecule id="O94916-4"/>
</dbReference>
<dbReference type="Pumba" id="O94916"/>
<dbReference type="Antibodypedia" id="29866">
    <property type="antibodies" value="314 antibodies from 30 providers"/>
</dbReference>
<dbReference type="DNASU" id="10725"/>
<dbReference type="Ensembl" id="ENST00000349945.7">
    <molecule id="O94916-5"/>
    <property type="protein sequence ID" value="ENSP00000338806.3"/>
    <property type="gene ID" value="ENSG00000102908.23"/>
</dbReference>
<dbReference type="Ensembl" id="ENST00000354436.6">
    <molecule id="O94916-1"/>
    <property type="protein sequence ID" value="ENSP00000346420.2"/>
    <property type="gene ID" value="ENSG00000102908.23"/>
</dbReference>
<dbReference type="Ensembl" id="ENST00000426654.6">
    <molecule id="O94916-3"/>
    <property type="protein sequence ID" value="ENSP00000413126.2"/>
    <property type="gene ID" value="ENSG00000102908.23"/>
</dbReference>
<dbReference type="Ensembl" id="ENST00000567239.5">
    <molecule id="O94916-4"/>
    <property type="protein sequence ID" value="ENSP00000457593.1"/>
    <property type="gene ID" value="ENSG00000102908.23"/>
</dbReference>
<dbReference type="GeneID" id="10725"/>
<dbReference type="KEGG" id="hsa:10725"/>
<dbReference type="MANE-Select" id="ENST00000349945.7">
    <molecule id="O94916-5"/>
    <property type="protein sequence ID" value="ENSP00000338806.3"/>
    <property type="RefSeq nucleotide sequence ID" value="NM_138713.4"/>
    <property type="RefSeq protein sequence ID" value="NP_619727.2"/>
</dbReference>
<dbReference type="UCSC" id="uc002exi.4">
    <molecule id="O94916-1"/>
    <property type="organism name" value="human"/>
</dbReference>
<dbReference type="AGR" id="HGNC:7774"/>
<dbReference type="CTD" id="10725"/>
<dbReference type="DisGeNET" id="10725"/>
<dbReference type="GeneCards" id="NFAT5"/>
<dbReference type="HGNC" id="HGNC:7774">
    <property type="gene designation" value="NFAT5"/>
</dbReference>
<dbReference type="HPA" id="ENSG00000102908">
    <property type="expression patterns" value="Low tissue specificity"/>
</dbReference>
<dbReference type="MalaCards" id="NFAT5"/>
<dbReference type="MIM" id="604708">
    <property type="type" value="gene"/>
</dbReference>
<dbReference type="neXtProt" id="NX_O94916"/>
<dbReference type="OpenTargets" id="ENSG00000102908"/>
<dbReference type="Orphanet" id="529980">
    <property type="disease" value="Inflammatory bowel disease-recurrent sinopulmonary infections syndrome"/>
</dbReference>
<dbReference type="PharmGKB" id="PA31581"/>
<dbReference type="VEuPathDB" id="HostDB:ENSG00000102908"/>
<dbReference type="eggNOG" id="ENOG502QSVE">
    <property type="taxonomic scope" value="Eukaryota"/>
</dbReference>
<dbReference type="GeneTree" id="ENSGT00940000155213"/>
<dbReference type="HOGENOM" id="CLU_004396_0_0_1"/>
<dbReference type="InParanoid" id="O94916"/>
<dbReference type="OMA" id="PYQNQVI"/>
<dbReference type="OrthoDB" id="5346094at2759"/>
<dbReference type="PAN-GO" id="O94916">
    <property type="GO annotations" value="7 GO annotations based on evolutionary models"/>
</dbReference>
<dbReference type="PhylomeDB" id="O94916"/>
<dbReference type="TreeFam" id="TF326480"/>
<dbReference type="PathwayCommons" id="O94916"/>
<dbReference type="SignaLink" id="O94916"/>
<dbReference type="SIGNOR" id="O94916"/>
<dbReference type="BioGRID-ORCS" id="10725">
    <property type="hits" value="19 hits in 1177 CRISPR screens"/>
</dbReference>
<dbReference type="CD-CODE" id="81D2A7B6">
    <property type="entry name" value="Nuclear stress body"/>
</dbReference>
<dbReference type="ChiTaRS" id="NFAT5">
    <property type="organism name" value="human"/>
</dbReference>
<dbReference type="EvolutionaryTrace" id="O94916"/>
<dbReference type="GeneWiki" id="NFAT5"/>
<dbReference type="GenomeRNAi" id="10725"/>
<dbReference type="Pharos" id="O94916">
    <property type="development level" value="Tbio"/>
</dbReference>
<dbReference type="PRO" id="PR:O94916"/>
<dbReference type="Proteomes" id="UP000005640">
    <property type="component" value="Chromosome 16"/>
</dbReference>
<dbReference type="RNAct" id="O94916">
    <property type="molecule type" value="protein"/>
</dbReference>
<dbReference type="Bgee" id="ENSG00000102908">
    <property type="expression patterns" value="Expressed in renal medulla and 190 other cell types or tissues"/>
</dbReference>
<dbReference type="ExpressionAtlas" id="O94916">
    <property type="expression patterns" value="baseline and differential"/>
</dbReference>
<dbReference type="GO" id="GO:0000785">
    <property type="term" value="C:chromatin"/>
    <property type="evidence" value="ECO:0000247"/>
    <property type="project" value="NTNU_SB"/>
</dbReference>
<dbReference type="GO" id="GO:0005829">
    <property type="term" value="C:cytosol"/>
    <property type="evidence" value="ECO:0000314"/>
    <property type="project" value="HPA"/>
</dbReference>
<dbReference type="GO" id="GO:0005654">
    <property type="term" value="C:nucleoplasm"/>
    <property type="evidence" value="ECO:0000314"/>
    <property type="project" value="HPA"/>
</dbReference>
<dbReference type="GO" id="GO:0005634">
    <property type="term" value="C:nucleus"/>
    <property type="evidence" value="ECO:0000314"/>
    <property type="project" value="MGI"/>
</dbReference>
<dbReference type="GO" id="GO:0005667">
    <property type="term" value="C:transcription regulator complex"/>
    <property type="evidence" value="ECO:0000318"/>
    <property type="project" value="GO_Central"/>
</dbReference>
<dbReference type="GO" id="GO:0003682">
    <property type="term" value="F:chromatin binding"/>
    <property type="evidence" value="ECO:0000314"/>
    <property type="project" value="UniProtKB"/>
</dbReference>
<dbReference type="GO" id="GO:0001228">
    <property type="term" value="F:DNA-binding transcription activator activity, RNA polymerase II-specific"/>
    <property type="evidence" value="ECO:0000314"/>
    <property type="project" value="NTNU_SB"/>
</dbReference>
<dbReference type="GO" id="GO:0003700">
    <property type="term" value="F:DNA-binding transcription factor activity"/>
    <property type="evidence" value="ECO:0000304"/>
    <property type="project" value="ProtInc"/>
</dbReference>
<dbReference type="GO" id="GO:0000981">
    <property type="term" value="F:DNA-binding transcription factor activity, RNA polymerase II-specific"/>
    <property type="evidence" value="ECO:0000247"/>
    <property type="project" value="NTNU_SB"/>
</dbReference>
<dbReference type="GO" id="GO:0000978">
    <property type="term" value="F:RNA polymerase II cis-regulatory region sequence-specific DNA binding"/>
    <property type="evidence" value="ECO:0000314"/>
    <property type="project" value="NTNU_SB"/>
</dbReference>
<dbReference type="GO" id="GO:1990837">
    <property type="term" value="F:sequence-specific double-stranded DNA binding"/>
    <property type="evidence" value="ECO:0000314"/>
    <property type="project" value="ARUK-UCL"/>
</dbReference>
<dbReference type="GO" id="GO:0033173">
    <property type="term" value="P:calcineurin-NFAT signaling cascade"/>
    <property type="evidence" value="ECO:0000318"/>
    <property type="project" value="GO_Central"/>
</dbReference>
<dbReference type="GO" id="GO:0071474">
    <property type="term" value="P:cellular hyperosmotic response"/>
    <property type="evidence" value="ECO:0000304"/>
    <property type="project" value="ProtInc"/>
</dbReference>
<dbReference type="GO" id="GO:0071345">
    <property type="term" value="P:cellular response to cytokine stimulus"/>
    <property type="evidence" value="ECO:0000315"/>
    <property type="project" value="ARUK-UCL"/>
</dbReference>
<dbReference type="GO" id="GO:0006974">
    <property type="term" value="P:DNA damage response"/>
    <property type="evidence" value="ECO:0000314"/>
    <property type="project" value="UniProtKB"/>
</dbReference>
<dbReference type="GO" id="GO:0043123">
    <property type="term" value="P:positive regulation of canonical NF-kappaB signal transduction"/>
    <property type="evidence" value="ECO:0000315"/>
    <property type="project" value="ARUK-UCL"/>
</dbReference>
<dbReference type="GO" id="GO:0010628">
    <property type="term" value="P:positive regulation of gene expression"/>
    <property type="evidence" value="ECO:0007669"/>
    <property type="project" value="Ensembl"/>
</dbReference>
<dbReference type="GO" id="GO:1904996">
    <property type="term" value="P:positive regulation of leukocyte adhesion to vascular endothelial cell"/>
    <property type="evidence" value="ECO:0000315"/>
    <property type="project" value="ARUK-UCL"/>
</dbReference>
<dbReference type="GO" id="GO:0045944">
    <property type="term" value="P:positive regulation of transcription by RNA polymerase II"/>
    <property type="evidence" value="ECO:0000314"/>
    <property type="project" value="NTNU_SB"/>
</dbReference>
<dbReference type="GO" id="GO:0062176">
    <property type="term" value="P:R-loop processing"/>
    <property type="evidence" value="ECO:0000314"/>
    <property type="project" value="UniProtKB"/>
</dbReference>
<dbReference type="GO" id="GO:0070884">
    <property type="term" value="P:regulation of calcineurin-NFAT signaling cascade"/>
    <property type="evidence" value="ECO:0007669"/>
    <property type="project" value="Ensembl"/>
</dbReference>
<dbReference type="GO" id="GO:0007165">
    <property type="term" value="P:signal transduction"/>
    <property type="evidence" value="ECO:0000303"/>
    <property type="project" value="ProtInc"/>
</dbReference>
<dbReference type="GO" id="GO:0006366">
    <property type="term" value="P:transcription by RNA polymerase II"/>
    <property type="evidence" value="ECO:0000304"/>
    <property type="project" value="ProtInc"/>
</dbReference>
<dbReference type="CDD" id="cd01178">
    <property type="entry name" value="IPT_NFAT"/>
    <property type="match status" value="1"/>
</dbReference>
<dbReference type="CDD" id="cd07882">
    <property type="entry name" value="RHD-n_TonEBP"/>
    <property type="match status" value="1"/>
</dbReference>
<dbReference type="FunFam" id="2.60.40.10:FF:000174">
    <property type="entry name" value="Nuclear factor of activated T-cells 5, tonicity-responsive"/>
    <property type="match status" value="1"/>
</dbReference>
<dbReference type="FunFam" id="2.60.40.340:FF:000002">
    <property type="entry name" value="Nuclear factor of activated T-cells 5, tonicity-responsive"/>
    <property type="match status" value="1"/>
</dbReference>
<dbReference type="Gene3D" id="2.60.40.10">
    <property type="entry name" value="Immunoglobulins"/>
    <property type="match status" value="1"/>
</dbReference>
<dbReference type="Gene3D" id="2.60.40.340">
    <property type="entry name" value="Rel homology domain (RHD), DNA-binding domain"/>
    <property type="match status" value="1"/>
</dbReference>
<dbReference type="IDEAL" id="IID00260"/>
<dbReference type="InterPro" id="IPR013783">
    <property type="entry name" value="Ig-like_fold"/>
</dbReference>
<dbReference type="InterPro" id="IPR014756">
    <property type="entry name" value="Ig_E-set"/>
</dbReference>
<dbReference type="InterPro" id="IPR002909">
    <property type="entry name" value="IPT_dom"/>
</dbReference>
<dbReference type="InterPro" id="IPR008366">
    <property type="entry name" value="NFAT"/>
</dbReference>
<dbReference type="InterPro" id="IPR015646">
    <property type="entry name" value="NFAT5_RHD_DNA-bd"/>
</dbReference>
<dbReference type="InterPro" id="IPR008967">
    <property type="entry name" value="p53-like_TF_DNA-bd_sf"/>
</dbReference>
<dbReference type="InterPro" id="IPR032397">
    <property type="entry name" value="RHD_dimer"/>
</dbReference>
<dbReference type="InterPro" id="IPR011539">
    <property type="entry name" value="RHD_DNA_bind_dom"/>
</dbReference>
<dbReference type="InterPro" id="IPR037059">
    <property type="entry name" value="RHD_DNA_bind_dom_sf"/>
</dbReference>
<dbReference type="PANTHER" id="PTHR12533">
    <property type="entry name" value="NFAT"/>
    <property type="match status" value="1"/>
</dbReference>
<dbReference type="PANTHER" id="PTHR12533:SF10">
    <property type="entry name" value="NUCLEAR FACTOR OF ACTIVATED T-CELLS 5"/>
    <property type="match status" value="1"/>
</dbReference>
<dbReference type="Pfam" id="PF16179">
    <property type="entry name" value="RHD_dimer"/>
    <property type="match status" value="1"/>
</dbReference>
<dbReference type="Pfam" id="PF00554">
    <property type="entry name" value="RHD_DNA_bind"/>
    <property type="match status" value="1"/>
</dbReference>
<dbReference type="PRINTS" id="PR01789">
    <property type="entry name" value="NUCFACTORATC"/>
</dbReference>
<dbReference type="SMART" id="SM00429">
    <property type="entry name" value="IPT"/>
    <property type="match status" value="1"/>
</dbReference>
<dbReference type="SUPFAM" id="SSF81296">
    <property type="entry name" value="E set domains"/>
    <property type="match status" value="1"/>
</dbReference>
<dbReference type="SUPFAM" id="SSF49417">
    <property type="entry name" value="p53-like transcription factors"/>
    <property type="match status" value="1"/>
</dbReference>
<dbReference type="PROSITE" id="PS50254">
    <property type="entry name" value="REL_2"/>
    <property type="match status" value="1"/>
</dbReference>
<sequence length="1531" mass="165763">MPSDFISLLSADLDLESPKSLYSRESVYDLLPKELQLPPSRETSVASMSQTSGGEAGSPPPAVVAADASSAPSSSSMGGACSSFTTSSSPTIYSTSVTDSKAMQVESCSSAVGVSNRGVSEKQLTSNTVQQHPSTPKRHTVLYISPPPEDLLDNSRMSCQDEGCGLESEQSCSMWMEDSPSNFSNMSTSSYNDNTEVPRKSRKRNPKQRPGVKRRDCEESNMDIFDADSAKAPHYVLSQLTTDNKGNSKAGNGTLENQKGTGVKKSPMLCGQYPVKSEGKELKIVVQPETQHRARYLTEGSRGSVKDRTQQGFPTVKLEGHNEPVVLQVFVGNDSGRVKPHGFYQACRVTGRNTTPCKEVDIEGTTVIEVGLDPSNNMTLAVDCVGILKLRNADVEARIGIAGSKKKSTRARLVFRVNIMRKDGSTLTLQTPSSPILCTQPAGVPEILKKSLHSCSVKGEEEVFLIGKNFLKGTKVIFQENVSDENSWKSEAEIDMELFHQNHLIVKVPPYHDQHITLPVSVGIYVVTNAGRSHDVQPFTYTPDPAAAGALNVNVKKEISSPARPCSFEEAMKAMKTTGCNLDKVNIIPNALMTPLIPSSMIKSEDVTPMEVTAEKRSSTIFKTTKSVGSTQQTLENISNIAGNGSFSSPSSSHLPSENEKQQQIQPKAYNPETLTTIQTQDISQPGTFPAVSASSQLPNSDALLQQATQFQTRETQSREILQSDGTVVNLSQLTEASQQQQQSPLQEQAQTLQQQISSNIFPSPNSVSQLQNTIQQLQAGSFTGSTASGSSGSVDLVQQVLEAQQQLSSVLFSAPDGNENVQEQLSADIFQQVSQIQSGVSPGMFSSTEPTVHTRPDNLLPGRAESVHPQSENTLSNQQQQQQQQQQVMESSAAMVMEMQQSICQAAAQIQSELFPSTASANGNLQQSPVYQQTSHMMSALSTNEDMQMQCELFSSPPAVSGNETSTTTTQQVATPGTTMFQTSSSGDGEETGTQAKQIQNSVFQTMVQMQHSGDNQPQVNLFSSTKSMMSVQNSGTQQQGNGLFQQGNEMMSLQSGNFLQQSSHSQAQLFHPQNPIADAQNLSQETQGSLFHSPNPIVHSQTSTTSSEQMQPPMFHSQSTIAVLQGSSVPQDQQSTNIFLSQSPMNNLQTNTVAQEAFFAAPNSISPLQSTSNSEQQAAFQQQAPISHIQTPMLSQEQAQPPQQGLFQPQVALGSLPPNPMPQSQQGTMFQSQHSIVAMQSNSPSQEQQQQQQQQQQQQQQQQQSILFSNQNTMATMASPKQPPPNMIFNPNQNPMANQEQQNQSIFHQQSNMAPMNQEQQPMQFQSQSTVSSLQNPGPTQSESSQTPLFHSSPQIQLVQGSPSSQEQQVTLFLSPASMSALQTSINQQDMQQSPLYSPQNNMPGIQGATSSPQPQATLFHNTAGGTMNQLQNSPGSSQQTSGMFLFGIQNNCSQLLTSGPATLPDQLMAISQPGQPQNEGQPPVTTLLSQQMPENSPLASSINTNQNIEKIDLLVSLQNQGNNLTGSF</sequence>
<comment type="function">
    <text evidence="5 6 9 10">Transcription factor involved, among others, in the transcriptional regulation of osmoprotective and inflammatory genes. Binds the DNA consensus sequence 5'-[ACT][AG]TGGAAA[CAT]A[TA][ATC][CA][ATG][GT][GAC][CG][CT]-3' (PubMed:10377394). Mediates the transcriptional response to hypertonicity (PubMed:10051678). Positively regulates the transcription of LCN2 and S100A4 genes; optimal transactivation of these genes requires the presence of DDX5/DDX17 (PubMed:22266867). Also involved in the DNA damage response by preventing formation of R-loops; R-loops are composed of a DNA:RNA hybrid and the associated non-template single-stranded DNA (PubMed:34049076).</text>
</comment>
<comment type="subunit">
    <text evidence="1 6 7 9">Homodimer when bound to DNA, completely encircles its DNA target (PubMed:11780147). Interacts with CIDEC; this interaction is direct and retains NFAT5 in the cytoplasm (By similarity). Does not bind with Fos and Jun transcription factors (PubMed:10377394). Interacts with DDX5 and DDX17; this interaction leads to DDX5/DDX17 recruitment to LNC2 and S100A4 promoters and NFAT5-mediated DDX5/DDX17-enhanced transactivation (PubMed:22266867).</text>
</comment>
<comment type="interaction">
    <interactant intactId="EBI-308320">
        <id>O94916</id>
    </interactant>
    <interactant intactId="EBI-746012">
        <id>Q92841</id>
        <label>DDX17</label>
    </interactant>
    <organismsDiffer>false</organismsDiffer>
    <experiments>3</experiments>
</comment>
<comment type="interaction">
    <interactant intactId="EBI-308320">
        <id>O94916</id>
    </interactant>
    <interactant intactId="EBI-351962">
        <id>P17844</id>
        <label>DDX5</label>
    </interactant>
    <organismsDiffer>false</organismsDiffer>
    <experiments>4</experiments>
</comment>
<comment type="interaction">
    <interactant intactId="EBI-308320">
        <id>O94916</id>
    </interactant>
    <interactant intactId="EBI-2007911">
        <id>Q16236</id>
        <label>NFE2L2</label>
    </interactant>
    <organismsDiffer>false</organismsDiffer>
    <experiments>4</experiments>
</comment>
<comment type="interaction">
    <interactant intactId="EBI-15828651">
        <id>O94916-1</id>
    </interactant>
    <interactant intactId="EBI-78260">
        <id>P29350</id>
        <label>PTPN6</label>
    </interactant>
    <organismsDiffer>false</organismsDiffer>
    <experiments>4</experiments>
</comment>
<comment type="subcellular location">
    <subcellularLocation>
        <location evidence="6">Nucleus</location>
    </subcellularLocation>
    <subcellularLocation>
        <location evidence="2">Cytoplasm</location>
    </subcellularLocation>
    <subcellularLocation>
        <location evidence="10">Chromosome</location>
    </subcellularLocation>
    <text evidence="2 10">Nuclear distribution increases under hypertonic conditions (By similarity). Recruited to sites of R-loop-associated DNA damage following poly-ADP-ribosylation by PARP1 (PubMed:34049076).</text>
</comment>
<comment type="alternative products">
    <event type="alternative splicing"/>
    <isoform>
        <id>O94916-1</id>
        <name>C</name>
        <sequence type="displayed"/>
    </isoform>
    <isoform>
        <id>O94916-2</id>
        <name>A</name>
        <sequence type="described" ref="VSP_058784"/>
    </isoform>
    <isoform>
        <id>O94916-3</id>
        <name>B</name>
        <sequence type="described" ref="VSP_058785 VSP_058786 VSP_058787"/>
    </isoform>
    <isoform>
        <id>O94916-4</id>
        <name>D</name>
        <sequence type="described" ref="VSP_058785 VSP_058788"/>
    </isoform>
    <isoform>
        <id>O94916-5</id>
        <name>E</name>
        <sequence type="described" ref="VSP_058785"/>
    </isoform>
</comment>
<comment type="tissue specificity">
    <text evidence="5 6">Widely expressed, with highest levels in skeletal muscle, brain, heart and peripheral blood leukocytes.</text>
</comment>
<comment type="PTM">
    <text evidence="6 8">Phosphorylated (PubMed:10377394). Phosphorylated at Thr-135 by CDK5 in response to osmotic stress; this phosphorylation mediates its rapid nuclear localization (PubMed:21209322).</text>
</comment>
<comment type="PTM">
    <text evidence="10">Poly-ADP-ribosylated by PARP1 in response to DNA damage, promoting recruitment to sites of R-loop-associated DNA damage.</text>
</comment>
<comment type="miscellaneous">
    <molecule>Isoform A</molecule>
    <text evidence="9 16">The transcript encoding this isoform contains an alternative coding exon 4 which contains 2 stop codons and could target the transcript to nonsense-mediated mRNA decay after the pioneer round of translation, as suggested by the decreased NFAT5 protein levels when the number of exon 4-containing transcripts increases. The insertion of exon 4 is stimulated in the presence of DDX5 and DDX17. Isoform A sequence described in this entry starts at the first methionine downstream of exon 4 last stop codon. An alternative protein sequence can be predicted from this transcript starting at Met-1. This isoform encodes an 81 amino acid-long protein.</text>
</comment>
<comment type="miscellaneous">
    <molecule>Isoform B</molecule>
    <text evidence="9 16">The transcript encoding this isoform contains an alternative coding exon 4 which contains 2 stop codons and could target the transcript to nonsense-mediated mRNA decay after the pioneer round of translation, as suggested by the decreased NFAT5 protein levels when the number of exon 4-containing transcripts increases. The insertion of exon 4 is stimulated in the presence of DDX5 and DDX17.</text>
</comment>
<comment type="sequence caution" evidence="16">
    <conflict type="erroneous translation">
        <sequence resource="EMBL-CDS" id="AAK91166"/>
    </conflict>
</comment>
<comment type="sequence caution" evidence="16">
    <conflict type="frameshift">
        <sequence resource="EMBL-CDS" id="AAK91166"/>
    </conflict>
</comment>
<comment type="sequence caution" evidence="16">
    <conflict type="erroneous initiation">
        <sequence resource="EMBL-CDS" id="BAA74850"/>
    </conflict>
    <text>Extended N-terminus.</text>
</comment>
<comment type="sequence caution" evidence="16">
    <conflict type="frameshift">
        <sequence resource="EMBL-CDS" id="CAB09693"/>
    </conflict>
</comment>
<comment type="sequence caution" evidence="16">
    <conflict type="frameshift">
        <sequence resource="EMBL-CDS" id="CAC42765"/>
    </conflict>
</comment>
<keyword id="KW-0002">3D-structure</keyword>
<keyword id="KW-0007">Acetylation</keyword>
<keyword id="KW-0010">Activator</keyword>
<keyword id="KW-0013">ADP-ribosylation</keyword>
<keyword id="KW-0025">Alternative splicing</keyword>
<keyword id="KW-0158">Chromosome</keyword>
<keyword id="KW-0963">Cytoplasm</keyword>
<keyword id="KW-0227">DNA damage</keyword>
<keyword id="KW-0238">DNA-binding</keyword>
<keyword id="KW-1017">Isopeptide bond</keyword>
<keyword id="KW-0539">Nucleus</keyword>
<keyword id="KW-0597">Phosphoprotein</keyword>
<keyword id="KW-1267">Proteomics identification</keyword>
<keyword id="KW-1185">Reference proteome</keyword>
<keyword id="KW-0804">Transcription</keyword>
<keyword id="KW-0805">Transcription regulation</keyword>
<keyword id="KW-0832">Ubl conjugation</keyword>
<accession>O94916</accession>
<accession>A2RRB4</accession>
<accession>A6H8V5</accession>
<accession>E9PHR7</accession>
<accession>O95693</accession>
<accession>Q7LA65</accession>
<accession>Q969Q8</accession>
<accession>Q96QH3</accession>
<accession>Q9UN18</accession>
<organism>
    <name type="scientific">Homo sapiens</name>
    <name type="common">Human</name>
    <dbReference type="NCBI Taxonomy" id="9606"/>
    <lineage>
        <taxon>Eukaryota</taxon>
        <taxon>Metazoa</taxon>
        <taxon>Chordata</taxon>
        <taxon>Craniata</taxon>
        <taxon>Vertebrata</taxon>
        <taxon>Euteleostomi</taxon>
        <taxon>Mammalia</taxon>
        <taxon>Eutheria</taxon>
        <taxon>Euarchontoglires</taxon>
        <taxon>Primates</taxon>
        <taxon>Haplorrhini</taxon>
        <taxon>Catarrhini</taxon>
        <taxon>Hominidae</taxon>
        <taxon>Homo</taxon>
    </lineage>
</organism>
<reference key="1">
    <citation type="journal article" date="1999" name="Proc. Natl. Acad. Sci. U.S.A.">
        <title>Tonicity-responsive enhancer binding protein, a rel-like protein that stimulates transcription in response to hypertonicity.</title>
        <authorList>
            <person name="Miyakawa H."/>
            <person name="Woo S.K."/>
            <person name="Dahl S.C."/>
            <person name="Handler J.S."/>
            <person name="Kwon H.M."/>
        </authorList>
    </citation>
    <scope>NUCLEOTIDE SEQUENCE [MRNA] (ISOFORM A)</scope>
    <scope>FUNCTION</scope>
    <scope>TISSUE SPECIFICITY</scope>
</reference>
<reference key="2">
    <citation type="journal article" date="1999" name="Proc. Natl. Acad. Sci. U.S.A.">
        <title>NFAT5, a constitutively nuclear NFAT protein that does not cooperate with Fos and Jun.</title>
        <authorList>
            <person name="Lopez-Rodriguez C."/>
            <person name="Aramburu J."/>
            <person name="Rakeman A.S."/>
            <person name="Rao A."/>
        </authorList>
    </citation>
    <scope>NUCLEOTIDE SEQUENCE [MRNA] (ISOFORM A)</scope>
    <scope>FUNCTION</scope>
    <scope>SUBCELLULAR LOCATION</scope>
    <scope>TISSUE SPECIFICITY</scope>
    <scope>PHOSPHORYLATION</scope>
    <source>
        <tissue>Brain</tissue>
    </source>
</reference>
<reference key="3">
    <citation type="journal article" date="2001" name="Cytogenet. Cell Genet.">
        <title>Genomic organization of the human NFAT5 gene: exon-intron structure of the 14-kb transcript and CpG-island analysis of the promoter region.</title>
        <authorList>
            <person name="Dalski A."/>
            <person name="Schwinger E."/>
            <person name="Zuhlke C."/>
        </authorList>
    </citation>
    <scope>NUCLEOTIDE SEQUENCE [MRNA] (ISOFORMS A; B AND E)</scope>
</reference>
<reference key="4">
    <citation type="journal article" date="1998" name="DNA Res.">
        <title>Prediction of the coding sequences of unidentified human genes. XII. The complete sequences of 100 new cDNA clones from brain which code for large proteins in vitro.</title>
        <authorList>
            <person name="Nagase T."/>
            <person name="Ishikawa K."/>
            <person name="Suyama M."/>
            <person name="Kikuno R."/>
            <person name="Hirosawa M."/>
            <person name="Miyajima N."/>
            <person name="Tanaka A."/>
            <person name="Kotani H."/>
            <person name="Nomura N."/>
            <person name="Ohara O."/>
        </authorList>
    </citation>
    <scope>NUCLEOTIDE SEQUENCE [LARGE SCALE MRNA] (ISOFORM C)</scope>
    <source>
        <tissue>Brain</tissue>
    </source>
</reference>
<reference key="5">
    <citation type="journal article" date="2004" name="Nature">
        <title>The sequence and analysis of duplication-rich human chromosome 16.</title>
        <authorList>
            <person name="Martin J."/>
            <person name="Han C."/>
            <person name="Gordon L.A."/>
            <person name="Terry A."/>
            <person name="Prabhakar S."/>
            <person name="She X."/>
            <person name="Xie G."/>
            <person name="Hellsten U."/>
            <person name="Chan Y.M."/>
            <person name="Altherr M."/>
            <person name="Couronne O."/>
            <person name="Aerts A."/>
            <person name="Bajorek E."/>
            <person name="Black S."/>
            <person name="Blumer H."/>
            <person name="Branscomb E."/>
            <person name="Brown N.C."/>
            <person name="Bruno W.J."/>
            <person name="Buckingham J.M."/>
            <person name="Callen D.F."/>
            <person name="Campbell C.S."/>
            <person name="Campbell M.L."/>
            <person name="Campbell E.W."/>
            <person name="Caoile C."/>
            <person name="Challacombe J.F."/>
            <person name="Chasteen L.A."/>
            <person name="Chertkov O."/>
            <person name="Chi H.C."/>
            <person name="Christensen M."/>
            <person name="Clark L.M."/>
            <person name="Cohn J.D."/>
            <person name="Denys M."/>
            <person name="Detter J.C."/>
            <person name="Dickson M."/>
            <person name="Dimitrijevic-Bussod M."/>
            <person name="Escobar J."/>
            <person name="Fawcett J.J."/>
            <person name="Flowers D."/>
            <person name="Fotopulos D."/>
            <person name="Glavina T."/>
            <person name="Gomez M."/>
            <person name="Gonzales E."/>
            <person name="Goodstein D."/>
            <person name="Goodwin L.A."/>
            <person name="Grady D.L."/>
            <person name="Grigoriev I."/>
            <person name="Groza M."/>
            <person name="Hammon N."/>
            <person name="Hawkins T."/>
            <person name="Haydu L."/>
            <person name="Hildebrand C.E."/>
            <person name="Huang W."/>
            <person name="Israni S."/>
            <person name="Jett J."/>
            <person name="Jewett P.B."/>
            <person name="Kadner K."/>
            <person name="Kimball H."/>
            <person name="Kobayashi A."/>
            <person name="Krawczyk M.-C."/>
            <person name="Leyba T."/>
            <person name="Longmire J.L."/>
            <person name="Lopez F."/>
            <person name="Lou Y."/>
            <person name="Lowry S."/>
            <person name="Ludeman T."/>
            <person name="Manohar C.F."/>
            <person name="Mark G.A."/>
            <person name="McMurray K.L."/>
            <person name="Meincke L.J."/>
            <person name="Morgan J."/>
            <person name="Moyzis R.K."/>
            <person name="Mundt M.O."/>
            <person name="Munk A.C."/>
            <person name="Nandkeshwar R.D."/>
            <person name="Pitluck S."/>
            <person name="Pollard M."/>
            <person name="Predki P."/>
            <person name="Parson-Quintana B."/>
            <person name="Ramirez L."/>
            <person name="Rash S."/>
            <person name="Retterer J."/>
            <person name="Ricke D.O."/>
            <person name="Robinson D.L."/>
            <person name="Rodriguez A."/>
            <person name="Salamov A."/>
            <person name="Saunders E.H."/>
            <person name="Scott D."/>
            <person name="Shough T."/>
            <person name="Stallings R.L."/>
            <person name="Stalvey M."/>
            <person name="Sutherland R.D."/>
            <person name="Tapia R."/>
            <person name="Tesmer J.G."/>
            <person name="Thayer N."/>
            <person name="Thompson L.S."/>
            <person name="Tice H."/>
            <person name="Torney D.C."/>
            <person name="Tran-Gyamfi M."/>
            <person name="Tsai M."/>
            <person name="Ulanovsky L.E."/>
            <person name="Ustaszewska A."/>
            <person name="Vo N."/>
            <person name="White P.S."/>
            <person name="Williams A.L."/>
            <person name="Wills P.L."/>
            <person name="Wu J.-R."/>
            <person name="Wu K."/>
            <person name="Yang J."/>
            <person name="DeJong P."/>
            <person name="Bruce D."/>
            <person name="Doggett N.A."/>
            <person name="Deaven L."/>
            <person name="Schmutz J."/>
            <person name="Grimwood J."/>
            <person name="Richardson P."/>
            <person name="Rokhsar D.S."/>
            <person name="Eichler E.E."/>
            <person name="Gilna P."/>
            <person name="Lucas S.M."/>
            <person name="Myers R.M."/>
            <person name="Rubin E.M."/>
            <person name="Pennacchio L.A."/>
        </authorList>
    </citation>
    <scope>NUCLEOTIDE SEQUENCE [LARGE SCALE GENOMIC DNA]</scope>
</reference>
<reference key="6">
    <citation type="submission" date="2005-07" db="EMBL/GenBank/DDBJ databases">
        <authorList>
            <person name="Mural R.J."/>
            <person name="Istrail S."/>
            <person name="Sutton G.G."/>
            <person name="Florea L."/>
            <person name="Halpern A.L."/>
            <person name="Mobarry C.M."/>
            <person name="Lippert R."/>
            <person name="Walenz B."/>
            <person name="Shatkay H."/>
            <person name="Dew I."/>
            <person name="Miller J.R."/>
            <person name="Flanigan M.J."/>
            <person name="Edwards N.J."/>
            <person name="Bolanos R."/>
            <person name="Fasulo D."/>
            <person name="Halldorsson B.V."/>
            <person name="Hannenhalli S."/>
            <person name="Turner R."/>
            <person name="Yooseph S."/>
            <person name="Lu F."/>
            <person name="Nusskern D.R."/>
            <person name="Shue B.C."/>
            <person name="Zheng X.H."/>
            <person name="Zhong F."/>
            <person name="Delcher A.L."/>
            <person name="Huson D.H."/>
            <person name="Kravitz S.A."/>
            <person name="Mouchard L."/>
            <person name="Reinert K."/>
            <person name="Remington K.A."/>
            <person name="Clark A.G."/>
            <person name="Waterman M.S."/>
            <person name="Eichler E.E."/>
            <person name="Adams M.D."/>
            <person name="Hunkapiller M.W."/>
            <person name="Myers E.W."/>
            <person name="Venter J.C."/>
        </authorList>
    </citation>
    <scope>NUCLEOTIDE SEQUENCE [LARGE SCALE GENOMIC DNA]</scope>
</reference>
<reference key="7">
    <citation type="journal article" date="2004" name="Genome Res.">
        <title>The status, quality, and expansion of the NIH full-length cDNA project: the Mammalian Gene Collection (MGC).</title>
        <authorList>
            <consortium name="The MGC Project Team"/>
        </authorList>
    </citation>
    <scope>NUCLEOTIDE SEQUENCE [LARGE SCALE MRNA] (ISOFORMS C AND D)</scope>
</reference>
<reference key="8">
    <citation type="journal article" date="1999" name="Cold Spring Harb. Symp. Quant. Biol.">
        <title>NFAT5: the NF-AT family of transcription factors expands in a new direction.</title>
        <authorList>
            <person name="Lopez-Rodriguez C."/>
            <person name="Aramburu J."/>
            <person name="Rakeman A.S."/>
            <person name="Copeland N.G."/>
            <person name="Gilbert D.J."/>
            <person name="Thomas S."/>
            <person name="Disteche C."/>
            <person name="Jenkins N.A."/>
            <person name="Rao A."/>
        </authorList>
    </citation>
    <scope>NUCLEOTIDE SEQUENCE [MRNA] OF 48-1531</scope>
    <source>
        <tissue>Brain</tissue>
    </source>
</reference>
<reference key="9">
    <citation type="journal article" date="1999" name="DNA Seq.">
        <title>Isolation and characterization of novel CAG repeat containing genes expressed in human brain.</title>
        <authorList>
            <person name="Zuehlke C."/>
            <person name="Kiehl R."/>
            <person name="Johannsmeyer A."/>
            <person name="Grzeschik K.H."/>
            <person name="Schwinger E."/>
        </authorList>
    </citation>
    <scope>NUCLEOTIDE SEQUENCE [MRNA] OF 675-1531</scope>
    <source>
        <tissue>Brain</tissue>
    </source>
</reference>
<reference key="10">
    <citation type="journal article" date="2002" name="Am. J. Physiol.">
        <title>Mouse TonEBP-NFAT5: expression in early development and alternative splicing.</title>
        <authorList>
            <person name="Maouyo D."/>
            <person name="Kim J.Y."/>
            <person name="Lee S.D."/>
            <person name="Wu Y."/>
            <person name="Woo S.K."/>
            <person name="Kwon H.M."/>
        </authorList>
    </citation>
    <scope>ALTERNATIVE SPLICING</scope>
</reference>
<reference key="11">
    <citation type="journal article" date="2008" name="Proc. Natl. Acad. Sci. U.S.A.">
        <title>A quantitative atlas of mitotic phosphorylation.</title>
        <authorList>
            <person name="Dephoure N."/>
            <person name="Zhou C."/>
            <person name="Villen J."/>
            <person name="Beausoleil S.A."/>
            <person name="Bakalarski C.E."/>
            <person name="Elledge S.J."/>
            <person name="Gygi S.P."/>
        </authorList>
    </citation>
    <scope>IDENTIFICATION BY MASS SPECTROMETRY [LARGE SCALE ANALYSIS]</scope>
    <source>
        <tissue>Cervix carcinoma</tissue>
    </source>
</reference>
<reference key="12">
    <citation type="journal article" date="2011" name="Mol. Biol. Cell">
        <title>High NaCl-induced activation of CDK5 increases phosphorylation of the osmoprotective transcription factor TonEBP/OREBP at threonine 135, which contributes to its rapid nuclear localization.</title>
        <authorList>
            <person name="Gallazzini M."/>
            <person name="Heussler G.E."/>
            <person name="Kunin M."/>
            <person name="Izumi Y."/>
            <person name="Burg M.B."/>
            <person name="Ferraris J.D."/>
        </authorList>
    </citation>
    <scope>PHOSPHORYLATION AT SER-120; SER-134; THR-135 AND SER-155</scope>
    <scope>MUTAGENESIS OF SER-120; SER-134; THR-135 AND SER-155</scope>
</reference>
<reference key="13">
    <citation type="journal article" date="2012" name="Oncogene">
        <title>Dual role of the ddx5/ddx17 RNA helicases in the control of the pro-migratory NFAT5 transcription factor.</title>
        <authorList>
            <person name="Germann S."/>
            <person name="Gratadou L."/>
            <person name="Zonta E."/>
            <person name="Dardenne E."/>
            <person name="Gaudineau B."/>
            <person name="Fougere M."/>
            <person name="Samaan S."/>
            <person name="Dutertre M."/>
            <person name="Jauliac S."/>
            <person name="Auboeuf D."/>
        </authorList>
    </citation>
    <scope>FUNCTION</scope>
    <scope>INTERACTION WITH DDX5 AND DDX17</scope>
    <scope>ALTERNATIVE SPLICING</scope>
</reference>
<reference key="14">
    <citation type="journal article" date="2013" name="J. Proteome Res.">
        <title>Toward a comprehensive characterization of a human cancer cell phosphoproteome.</title>
        <authorList>
            <person name="Zhou H."/>
            <person name="Di Palma S."/>
            <person name="Preisinger C."/>
            <person name="Peng M."/>
            <person name="Polat A.N."/>
            <person name="Heck A.J."/>
            <person name="Mohammed S."/>
        </authorList>
    </citation>
    <scope>PHOSPHORYLATION [LARGE SCALE ANALYSIS] AT THR-135 AND SER-561</scope>
    <scope>IDENTIFICATION BY MASS SPECTROMETRY [LARGE SCALE ANALYSIS]</scope>
    <source>
        <tissue>Cervix carcinoma</tissue>
        <tissue>Erythroleukemia</tissue>
    </source>
</reference>
<reference key="15">
    <citation type="journal article" date="2014" name="J. Proteomics">
        <title>An enzyme assisted RP-RPLC approach for in-depth analysis of human liver phosphoproteome.</title>
        <authorList>
            <person name="Bian Y."/>
            <person name="Song C."/>
            <person name="Cheng K."/>
            <person name="Dong M."/>
            <person name="Wang F."/>
            <person name="Huang J."/>
            <person name="Sun D."/>
            <person name="Wang L."/>
            <person name="Ye M."/>
            <person name="Zou H."/>
        </authorList>
    </citation>
    <scope>IDENTIFICATION BY MASS SPECTROMETRY [LARGE SCALE ANALYSIS]</scope>
    <source>
        <tissue>Liver</tissue>
    </source>
</reference>
<reference key="16">
    <citation type="journal article" date="2014" name="Nat. Struct. Mol. Biol.">
        <title>Uncovering global SUMOylation signaling networks in a site-specific manner.</title>
        <authorList>
            <person name="Hendriks I.A."/>
            <person name="D'Souza R.C."/>
            <person name="Yang B."/>
            <person name="Verlaan-de Vries M."/>
            <person name="Mann M."/>
            <person name="Vertegaal A.C."/>
        </authorList>
    </citation>
    <scope>SUMOYLATION [LARGE SCALE ANALYSIS] AT LYS-556</scope>
    <scope>IDENTIFICATION BY MASS SPECTROMETRY [LARGE SCALE ANALYSIS]</scope>
</reference>
<reference key="17">
    <citation type="journal article" date="2014" name="Proc. Natl. Acad. Sci. U.S.A.">
        <title>Mapping of SUMO sites and analysis of SUMOylation changes induced by external stimuli.</title>
        <authorList>
            <person name="Impens F."/>
            <person name="Radoshevich L."/>
            <person name="Cossart P."/>
            <person name="Ribet D."/>
        </authorList>
    </citation>
    <scope>SUMOYLATION [LARGE SCALE ANALYSIS] AT LYS-556</scope>
    <scope>IDENTIFICATION BY MASS SPECTROMETRY [LARGE SCALE ANALYSIS]</scope>
</reference>
<reference key="18">
    <citation type="journal article" date="2015" name="Cell Rep.">
        <title>SUMO-2 orchestrates chromatin modifiers in response to DNA damage.</title>
        <authorList>
            <person name="Hendriks I.A."/>
            <person name="Treffers L.W."/>
            <person name="Verlaan-de Vries M."/>
            <person name="Olsen J.V."/>
            <person name="Vertegaal A.C."/>
        </authorList>
    </citation>
    <scope>SUMOYLATION [LARGE SCALE ANALYSIS] AT LYS-556</scope>
    <scope>IDENTIFICATION BY MASS SPECTROMETRY [LARGE SCALE ANALYSIS]</scope>
</reference>
<reference key="19">
    <citation type="journal article" date="2015" name="Mol. Cell. Proteomics">
        <title>System-wide analysis of SUMOylation dynamics in response to replication stress reveals novel small ubiquitin-like modified target proteins and acceptor lysines relevant for genome stability.</title>
        <authorList>
            <person name="Xiao Z."/>
            <person name="Chang J.G."/>
            <person name="Hendriks I.A."/>
            <person name="Sigurdsson J.O."/>
            <person name="Olsen J.V."/>
            <person name="Vertegaal A.C."/>
        </authorList>
    </citation>
    <scope>SUMOYLATION [LARGE SCALE ANALYSIS] AT LYS-556</scope>
    <scope>SUMOYLATION [LARGE SCALE ANALYSIS] AT LYS-573 (ISOFORM D)</scope>
    <scope>IDENTIFICATION BY MASS SPECTROMETRY [LARGE SCALE ANALYSIS]</scope>
</reference>
<reference key="20">
    <citation type="journal article" date="2017" name="Nat. Struct. Mol. Biol.">
        <title>Site-specific mapping of the human SUMO proteome reveals co-modification with phosphorylation.</title>
        <authorList>
            <person name="Hendriks I.A."/>
            <person name="Lyon D."/>
            <person name="Young C."/>
            <person name="Jensen L.J."/>
            <person name="Vertegaal A.C."/>
            <person name="Nielsen M.L."/>
        </authorList>
    </citation>
    <scope>SUMOYLATION [LARGE SCALE ANALYSIS] AT LYS-556 AND LYS-603</scope>
    <scope>SUMOYLATION [LARGE SCALE ANALYSIS] AT LYS-573 (ISOFORM D)</scope>
    <scope>IDENTIFICATION BY MASS SPECTROMETRY [LARGE SCALE ANALYSIS]</scope>
</reference>
<reference key="21">
    <citation type="journal article" date="2021" name="DNA Repair">
        <title>PARP1-mediated PARylation of TonEBP prevents R-loop-associated DNA damage.</title>
        <authorList>
            <person name="Ye B.J."/>
            <person name="Kang H.J."/>
            <person name="Lee-Kwon W."/>
            <person name="Kwon H.M."/>
            <person name="Choi S.Y."/>
        </authorList>
    </citation>
    <scope>FUNCTION</scope>
    <scope>SUBCELLULAR LOCATION</scope>
    <scope>ADP-RIBOSYLATION</scope>
</reference>
<reference key="22">
    <citation type="journal article" date="2002" name="Nat. Struct. Biol.">
        <title>Structure of a TonEBP-DNA complex reveals DNA encircled by a transcription factor.</title>
        <authorList>
            <person name="Stroud J.C."/>
            <person name="Lopez-Rodriguez C."/>
            <person name="Rao A."/>
            <person name="Chen L."/>
        </authorList>
    </citation>
    <scope>X-RAY CRYSTALLOGRAPHY (2.86 ANGSTROMS) OF 264-544 IN COMPLEX WITH DNA</scope>
    <scope>SUBUNIT</scope>
</reference>
<gene>
    <name evidence="13 19" type="primary">NFAT5</name>
    <name evidence="11" type="synonym">KIAA0827</name>
    <name evidence="12" type="synonym">TONEBP</name>
</gene>